<organism>
    <name type="scientific">Lagothrix lagotricha</name>
    <name type="common">Brown woolly monkey</name>
    <name type="synonym">Humboldt's woolly monkey</name>
    <dbReference type="NCBI Taxonomy" id="9519"/>
    <lineage>
        <taxon>Eukaryota</taxon>
        <taxon>Metazoa</taxon>
        <taxon>Chordata</taxon>
        <taxon>Craniata</taxon>
        <taxon>Vertebrata</taxon>
        <taxon>Euteleostomi</taxon>
        <taxon>Mammalia</taxon>
        <taxon>Eutheria</taxon>
        <taxon>Euarchontoglires</taxon>
        <taxon>Primates</taxon>
        <taxon>Haplorrhini</taxon>
        <taxon>Platyrrhini</taxon>
        <taxon>Atelidae</taxon>
        <taxon>Atelinae</taxon>
        <taxon>Lagothrix</taxon>
    </lineage>
</organism>
<dbReference type="EMBL" id="AF030094">
    <property type="protein sequence ID" value="AAB92228.1"/>
    <property type="molecule type" value="Genomic_DNA"/>
</dbReference>
<dbReference type="SMR" id="P68070"/>
<dbReference type="GO" id="GO:0072562">
    <property type="term" value="C:blood microparticle"/>
    <property type="evidence" value="ECO:0007669"/>
    <property type="project" value="TreeGrafter"/>
</dbReference>
<dbReference type="GO" id="GO:0031838">
    <property type="term" value="C:haptoglobin-hemoglobin complex"/>
    <property type="evidence" value="ECO:0007669"/>
    <property type="project" value="TreeGrafter"/>
</dbReference>
<dbReference type="GO" id="GO:0005833">
    <property type="term" value="C:hemoglobin complex"/>
    <property type="evidence" value="ECO:0007669"/>
    <property type="project" value="InterPro"/>
</dbReference>
<dbReference type="GO" id="GO:0031720">
    <property type="term" value="F:haptoglobin binding"/>
    <property type="evidence" value="ECO:0007669"/>
    <property type="project" value="TreeGrafter"/>
</dbReference>
<dbReference type="GO" id="GO:0020037">
    <property type="term" value="F:heme binding"/>
    <property type="evidence" value="ECO:0007669"/>
    <property type="project" value="InterPro"/>
</dbReference>
<dbReference type="GO" id="GO:0031721">
    <property type="term" value="F:hemoglobin alpha binding"/>
    <property type="evidence" value="ECO:0007669"/>
    <property type="project" value="TreeGrafter"/>
</dbReference>
<dbReference type="GO" id="GO:0046872">
    <property type="term" value="F:metal ion binding"/>
    <property type="evidence" value="ECO:0007669"/>
    <property type="project" value="UniProtKB-KW"/>
</dbReference>
<dbReference type="GO" id="GO:0043177">
    <property type="term" value="F:organic acid binding"/>
    <property type="evidence" value="ECO:0007669"/>
    <property type="project" value="TreeGrafter"/>
</dbReference>
<dbReference type="GO" id="GO:0019825">
    <property type="term" value="F:oxygen binding"/>
    <property type="evidence" value="ECO:0007669"/>
    <property type="project" value="InterPro"/>
</dbReference>
<dbReference type="GO" id="GO:0005344">
    <property type="term" value="F:oxygen carrier activity"/>
    <property type="evidence" value="ECO:0007669"/>
    <property type="project" value="UniProtKB-KW"/>
</dbReference>
<dbReference type="GO" id="GO:0004601">
    <property type="term" value="F:peroxidase activity"/>
    <property type="evidence" value="ECO:0007669"/>
    <property type="project" value="TreeGrafter"/>
</dbReference>
<dbReference type="GO" id="GO:0042744">
    <property type="term" value="P:hydrogen peroxide catabolic process"/>
    <property type="evidence" value="ECO:0007669"/>
    <property type="project" value="TreeGrafter"/>
</dbReference>
<dbReference type="CDD" id="cd08925">
    <property type="entry name" value="Hb-beta-like"/>
    <property type="match status" value="1"/>
</dbReference>
<dbReference type="FunFam" id="1.10.490.10:FF:000001">
    <property type="entry name" value="Hemoglobin subunit beta"/>
    <property type="match status" value="1"/>
</dbReference>
<dbReference type="Gene3D" id="1.10.490.10">
    <property type="entry name" value="Globins"/>
    <property type="match status" value="1"/>
</dbReference>
<dbReference type="InterPro" id="IPR000971">
    <property type="entry name" value="Globin"/>
</dbReference>
<dbReference type="InterPro" id="IPR009050">
    <property type="entry name" value="Globin-like_sf"/>
</dbReference>
<dbReference type="InterPro" id="IPR012292">
    <property type="entry name" value="Globin/Proto"/>
</dbReference>
<dbReference type="InterPro" id="IPR002337">
    <property type="entry name" value="Hemoglobin_b"/>
</dbReference>
<dbReference type="InterPro" id="IPR050056">
    <property type="entry name" value="Hemoglobin_oxygen_transport"/>
</dbReference>
<dbReference type="PANTHER" id="PTHR11442">
    <property type="entry name" value="HEMOGLOBIN FAMILY MEMBER"/>
    <property type="match status" value="1"/>
</dbReference>
<dbReference type="PANTHER" id="PTHR11442:SF52">
    <property type="entry name" value="HEMOGLOBIN SUBUNIT GAMMA-1"/>
    <property type="match status" value="1"/>
</dbReference>
<dbReference type="Pfam" id="PF00042">
    <property type="entry name" value="Globin"/>
    <property type="match status" value="1"/>
</dbReference>
<dbReference type="PRINTS" id="PR00814">
    <property type="entry name" value="BETAHAEM"/>
</dbReference>
<dbReference type="SUPFAM" id="SSF46458">
    <property type="entry name" value="Globin-like"/>
    <property type="match status" value="1"/>
</dbReference>
<dbReference type="PROSITE" id="PS01033">
    <property type="entry name" value="GLOBIN"/>
    <property type="match status" value="1"/>
</dbReference>
<feature type="chain" id="PRO_0000053257" description="Hemoglobin subunit gamma">
    <location>
        <begin position="1"/>
        <end position="147"/>
    </location>
</feature>
<feature type="domain" description="Globin" evidence="1">
    <location>
        <begin position="3"/>
        <end position="147"/>
    </location>
</feature>
<feature type="binding site" description="distal binding residue" evidence="1">
    <location>
        <position position="64"/>
    </location>
    <ligand>
        <name>heme b</name>
        <dbReference type="ChEBI" id="CHEBI:60344"/>
    </ligand>
    <ligandPart>
        <name>Fe</name>
        <dbReference type="ChEBI" id="CHEBI:18248"/>
    </ligandPart>
</feature>
<feature type="binding site" description="proximal binding residue" evidence="1">
    <location>
        <position position="93"/>
    </location>
    <ligand>
        <name>heme b</name>
        <dbReference type="ChEBI" id="CHEBI:60344"/>
    </ligand>
    <ligandPart>
        <name>Fe</name>
        <dbReference type="ChEBI" id="CHEBI:18248"/>
    </ligandPart>
</feature>
<keyword id="KW-0349">Heme</keyword>
<keyword id="KW-0408">Iron</keyword>
<keyword id="KW-0479">Metal-binding</keyword>
<keyword id="KW-0561">Oxygen transport</keyword>
<keyword id="KW-0813">Transport</keyword>
<reference key="1">
    <citation type="journal article" date="1999" name="Mol. Phylogenet. Evol.">
        <title>Molecular phylogeny of ateline new world monkeys (Platyrrhini, atelinae) based on gamma-globin gene sequences: evidence that Brachyteles is the sister group of Lagothrix.</title>
        <authorList>
            <person name="Meireles C.M."/>
            <person name="Czelusniak J."/>
            <person name="Schneider M.P.C."/>
            <person name="Muniz J.A.P.C."/>
            <person name="Brigido M.C."/>
            <person name="Ferreira H.S."/>
            <person name="Goodman M."/>
        </authorList>
    </citation>
    <scope>NUCLEOTIDE SEQUENCE [GENOMIC DNA]</scope>
</reference>
<comment type="function">
    <text>Gamma chains make up the fetal hemoglobin F, in combination with alpha chains.</text>
</comment>
<comment type="subunit">
    <text>Heterotetramer of two alpha chains and two gamma chains in fetal hemoglobin (Hb F).</text>
</comment>
<comment type="tissue specificity">
    <text>Red blood cells.</text>
</comment>
<comment type="similarity">
    <text evidence="1">Belongs to the globin family.</text>
</comment>
<evidence type="ECO:0000255" key="1">
    <source>
        <dbReference type="PROSITE-ProRule" id="PRU00238"/>
    </source>
</evidence>
<gene>
    <name type="primary">HBG</name>
</gene>
<proteinExistence type="evidence at transcript level"/>
<sequence length="147" mass="15940">MSNFTAEDKAAITSLWGKVNVEDAGGETLGRLLVVYPWTQRFFDSFGSLSSPSAIMGNPKVKAHGVKVLTSLGEAIKNLDDLKGTFGQLSELHCDKLHVDPENFRLLGNVLVTVLAILHGKEFTPEVQASWQKMVAGVASALASRYH</sequence>
<protein>
    <recommendedName>
        <fullName>Hemoglobin subunit gamma</fullName>
    </recommendedName>
    <alternativeName>
        <fullName>Gamma-globin</fullName>
    </alternativeName>
    <alternativeName>
        <fullName>Hemoglobin gamma chain</fullName>
    </alternativeName>
</protein>
<name>HBG_LAGLA</name>
<accession>P68070</accession>
<accession>P06891</accession>